<reference key="1">
    <citation type="journal article" date="1995" name="Science">
        <title>Whole-genome random sequencing and assembly of Haemophilus influenzae Rd.</title>
        <authorList>
            <person name="Fleischmann R.D."/>
            <person name="Adams M.D."/>
            <person name="White O."/>
            <person name="Clayton R.A."/>
            <person name="Kirkness E.F."/>
            <person name="Kerlavage A.R."/>
            <person name="Bult C.J."/>
            <person name="Tomb J.-F."/>
            <person name="Dougherty B.A."/>
            <person name="Merrick J.M."/>
            <person name="McKenney K."/>
            <person name="Sutton G.G."/>
            <person name="FitzHugh W."/>
            <person name="Fields C.A."/>
            <person name="Gocayne J.D."/>
            <person name="Scott J.D."/>
            <person name="Shirley R."/>
            <person name="Liu L.-I."/>
            <person name="Glodek A."/>
            <person name="Kelley J.M."/>
            <person name="Weidman J.F."/>
            <person name="Phillips C.A."/>
            <person name="Spriggs T."/>
            <person name="Hedblom E."/>
            <person name="Cotton M.D."/>
            <person name="Utterback T.R."/>
            <person name="Hanna M.C."/>
            <person name="Nguyen D.T."/>
            <person name="Saudek D.M."/>
            <person name="Brandon R.C."/>
            <person name="Fine L.D."/>
            <person name="Fritchman J.L."/>
            <person name="Fuhrmann J.L."/>
            <person name="Geoghagen N.S.M."/>
            <person name="Gnehm C.L."/>
            <person name="McDonald L.A."/>
            <person name="Small K.V."/>
            <person name="Fraser C.M."/>
            <person name="Smith H.O."/>
            <person name="Venter J.C."/>
        </authorList>
    </citation>
    <scope>NUCLEOTIDE SEQUENCE [LARGE SCALE GENOMIC DNA]</scope>
    <source>
        <strain>ATCC 51907 / DSM 11121 / KW20 / Rd</strain>
    </source>
</reference>
<organism>
    <name type="scientific">Haemophilus influenzae (strain ATCC 51907 / DSM 11121 / KW20 / Rd)</name>
    <dbReference type="NCBI Taxonomy" id="71421"/>
    <lineage>
        <taxon>Bacteria</taxon>
        <taxon>Pseudomonadati</taxon>
        <taxon>Pseudomonadota</taxon>
        <taxon>Gammaproteobacteria</taxon>
        <taxon>Pasteurellales</taxon>
        <taxon>Pasteurellaceae</taxon>
        <taxon>Haemophilus</taxon>
    </lineage>
</organism>
<evidence type="ECO:0000255" key="1">
    <source>
        <dbReference type="HAMAP-Rule" id="MF_02043"/>
    </source>
</evidence>
<name>DUSC_HAEIN</name>
<keyword id="KW-0285">Flavoprotein</keyword>
<keyword id="KW-0288">FMN</keyword>
<keyword id="KW-0521">NADP</keyword>
<keyword id="KW-0560">Oxidoreductase</keyword>
<keyword id="KW-1185">Reference proteome</keyword>
<keyword id="KW-0694">RNA-binding</keyword>
<keyword id="KW-0819">tRNA processing</keyword>
<keyword id="KW-0820">tRNA-binding</keyword>
<accession>P44606</accession>
<feature type="chain" id="PRO_0000162113" description="tRNA-dihydrouridine(16) synthase">
    <location>
        <begin position="1"/>
        <end position="310"/>
    </location>
</feature>
<feature type="active site" description="Proton donor" evidence="1">
    <location>
        <position position="98"/>
    </location>
</feature>
<feature type="binding site" evidence="1">
    <location>
        <begin position="7"/>
        <end position="9"/>
    </location>
    <ligand>
        <name>FMN</name>
        <dbReference type="ChEBI" id="CHEBI:58210"/>
    </ligand>
</feature>
<feature type="binding site" evidence="1">
    <location>
        <position position="68"/>
    </location>
    <ligand>
        <name>FMN</name>
        <dbReference type="ChEBI" id="CHEBI:58210"/>
    </ligand>
</feature>
<feature type="binding site" evidence="1">
    <location>
        <position position="139"/>
    </location>
    <ligand>
        <name>FMN</name>
        <dbReference type="ChEBI" id="CHEBI:58210"/>
    </ligand>
</feature>
<feature type="binding site" evidence="1">
    <location>
        <begin position="200"/>
        <end position="202"/>
    </location>
    <ligand>
        <name>FMN</name>
        <dbReference type="ChEBI" id="CHEBI:58210"/>
    </ligand>
</feature>
<feature type="binding site" evidence="1">
    <location>
        <begin position="224"/>
        <end position="225"/>
    </location>
    <ligand>
        <name>FMN</name>
        <dbReference type="ChEBI" id="CHEBI:58210"/>
    </ligand>
</feature>
<feature type="site" description="Interacts with tRNA; defines subfamily-specific binding signature" evidence="1">
    <location>
        <position position="35"/>
    </location>
</feature>
<feature type="site" description="Interacts with tRNA" evidence="1">
    <location>
        <position position="95"/>
    </location>
</feature>
<feature type="site" description="Interacts with tRNA" evidence="1">
    <location>
        <position position="176"/>
    </location>
</feature>
<feature type="site" description="Interacts with tRNA; defines subfamily-specific binding signature" evidence="1">
    <location>
        <position position="272"/>
    </location>
</feature>
<feature type="site" description="Interacts with tRNA; defines subfamily-specific binding signature" evidence="1">
    <location>
        <position position="274"/>
    </location>
</feature>
<feature type="site" description="Interacts with tRNA" evidence="1">
    <location>
        <position position="279"/>
    </location>
</feature>
<feature type="site" description="Interacts with tRNA" evidence="1">
    <location>
        <position position="295"/>
    </location>
</feature>
<comment type="function">
    <text evidence="1">Catalyzes the synthesis of 5,6-dihydrouridine (D), a modified base found in the D-loop of most tRNAs, via the reduction of the C5-C6 double bond in target uridines. Specifically modifies U16 in tRNAs.</text>
</comment>
<comment type="catalytic activity">
    <reaction evidence="1">
        <text>5,6-dihydrouridine(16) in tRNA + NADP(+) = uridine(16) in tRNA + NADPH + H(+)</text>
        <dbReference type="Rhea" id="RHEA:53376"/>
        <dbReference type="Rhea" id="RHEA-COMP:13543"/>
        <dbReference type="Rhea" id="RHEA-COMP:13544"/>
        <dbReference type="ChEBI" id="CHEBI:15378"/>
        <dbReference type="ChEBI" id="CHEBI:57783"/>
        <dbReference type="ChEBI" id="CHEBI:58349"/>
        <dbReference type="ChEBI" id="CHEBI:65315"/>
        <dbReference type="ChEBI" id="CHEBI:74443"/>
    </reaction>
</comment>
<comment type="catalytic activity">
    <reaction evidence="1">
        <text>5,6-dihydrouridine(16) in tRNA + NAD(+) = uridine(16) in tRNA + NADH + H(+)</text>
        <dbReference type="Rhea" id="RHEA:53380"/>
        <dbReference type="Rhea" id="RHEA-COMP:13543"/>
        <dbReference type="Rhea" id="RHEA-COMP:13544"/>
        <dbReference type="ChEBI" id="CHEBI:15378"/>
        <dbReference type="ChEBI" id="CHEBI:57540"/>
        <dbReference type="ChEBI" id="CHEBI:57945"/>
        <dbReference type="ChEBI" id="CHEBI:65315"/>
        <dbReference type="ChEBI" id="CHEBI:74443"/>
    </reaction>
</comment>
<comment type="cofactor">
    <cofactor evidence="1">
        <name>FMN</name>
        <dbReference type="ChEBI" id="CHEBI:58210"/>
    </cofactor>
</comment>
<comment type="similarity">
    <text evidence="1">Belongs to the Dus family. DusC subfamily.</text>
</comment>
<sequence>MRVILAPMQGVLDPFVRELLTEVNDYDLCITEFVRVVDQLLPEKVFYRLCPELKNQGFTSSGTPVRVQLLGQHPKCLAENAIRAIDLGSHGIDLNCGCPSKTVNGSNGGAALLKQPELIYRATQALRRAVPSEFPVSVKVRLGWDDISQAFEIADAVEQGGATEITVHGRTKADGYRADRINWKKISEVRERLSIPVIANGEIWHWQDGQDCLSQTGCQDLMVGRGALNIPNLSHVLKSNAEKMPWYEIQKILQKYANVENEYDSGFYHVARIKQWLRYLNKEYNEANQVFDKIKTCQTAEDLKLRLNEK</sequence>
<dbReference type="EC" id="1.3.1.-" evidence="1"/>
<dbReference type="EMBL" id="L42023">
    <property type="protein sequence ID" value="AAC21936.1"/>
    <property type="molecule type" value="Genomic_DNA"/>
</dbReference>
<dbReference type="PIR" id="F64146">
    <property type="entry name" value="F64146"/>
</dbReference>
<dbReference type="RefSeq" id="NP_438439.1">
    <property type="nucleotide sequence ID" value="NC_000907.1"/>
</dbReference>
<dbReference type="SMR" id="P44606"/>
<dbReference type="STRING" id="71421.HI_0270"/>
<dbReference type="EnsemblBacteria" id="AAC21936">
    <property type="protein sequence ID" value="AAC21936"/>
    <property type="gene ID" value="HI_0270"/>
</dbReference>
<dbReference type="KEGG" id="hin:HI_0270"/>
<dbReference type="PATRIC" id="fig|71421.8.peg.285"/>
<dbReference type="eggNOG" id="COG0042">
    <property type="taxonomic scope" value="Bacteria"/>
</dbReference>
<dbReference type="HOGENOM" id="CLU_013299_0_4_6"/>
<dbReference type="OrthoDB" id="9764501at2"/>
<dbReference type="PhylomeDB" id="P44606"/>
<dbReference type="BioCyc" id="HINF71421:G1GJ1-285-MONOMER"/>
<dbReference type="Proteomes" id="UP000000579">
    <property type="component" value="Chromosome"/>
</dbReference>
<dbReference type="GO" id="GO:0050660">
    <property type="term" value="F:flavin adenine dinucleotide binding"/>
    <property type="evidence" value="ECO:0007669"/>
    <property type="project" value="InterPro"/>
</dbReference>
<dbReference type="GO" id="GO:0010181">
    <property type="term" value="F:FMN binding"/>
    <property type="evidence" value="ECO:0007669"/>
    <property type="project" value="UniProtKB-UniRule"/>
</dbReference>
<dbReference type="GO" id="GO:0000049">
    <property type="term" value="F:tRNA binding"/>
    <property type="evidence" value="ECO:0007669"/>
    <property type="project" value="UniProtKB-UniRule"/>
</dbReference>
<dbReference type="GO" id="GO:0102262">
    <property type="term" value="F:tRNA-dihydrouridine16 synthase activity"/>
    <property type="evidence" value="ECO:0007669"/>
    <property type="project" value="RHEA"/>
</dbReference>
<dbReference type="CDD" id="cd02801">
    <property type="entry name" value="DUS_like_FMN"/>
    <property type="match status" value="1"/>
</dbReference>
<dbReference type="Gene3D" id="3.20.20.70">
    <property type="entry name" value="Aldolase class I"/>
    <property type="match status" value="1"/>
</dbReference>
<dbReference type="Gene3D" id="1.20.225.30">
    <property type="entry name" value="Dihydrouridine synthase, C-terminal recognition domain"/>
    <property type="match status" value="1"/>
</dbReference>
<dbReference type="HAMAP" id="MF_02043">
    <property type="entry name" value="DusC_subfam"/>
    <property type="match status" value="1"/>
</dbReference>
<dbReference type="InterPro" id="IPR013785">
    <property type="entry name" value="Aldolase_TIM"/>
</dbReference>
<dbReference type="InterPro" id="IPR035587">
    <property type="entry name" value="DUS-like_FMN-bd"/>
</dbReference>
<dbReference type="InterPro" id="IPR001269">
    <property type="entry name" value="DUS_fam"/>
</dbReference>
<dbReference type="InterPro" id="IPR032886">
    <property type="entry name" value="DusC"/>
</dbReference>
<dbReference type="InterPro" id="IPR042270">
    <property type="entry name" value="DusC_C"/>
</dbReference>
<dbReference type="InterPro" id="IPR018517">
    <property type="entry name" value="tRNA_hU_synthase_CS"/>
</dbReference>
<dbReference type="NCBIfam" id="NF007838">
    <property type="entry name" value="PRK10550.1"/>
    <property type="match status" value="1"/>
</dbReference>
<dbReference type="PANTHER" id="PTHR11082">
    <property type="entry name" value="TRNA-DIHYDROURIDINE SYNTHASE"/>
    <property type="match status" value="1"/>
</dbReference>
<dbReference type="PANTHER" id="PTHR11082:SF26">
    <property type="entry name" value="TRNA-DIHYDROURIDINE(16) SYNTHASE"/>
    <property type="match status" value="1"/>
</dbReference>
<dbReference type="Pfam" id="PF01207">
    <property type="entry name" value="Dus"/>
    <property type="match status" value="1"/>
</dbReference>
<dbReference type="PIRSF" id="PIRSF006621">
    <property type="entry name" value="Dus"/>
    <property type="match status" value="1"/>
</dbReference>
<dbReference type="SUPFAM" id="SSF51395">
    <property type="entry name" value="FMN-linked oxidoreductases"/>
    <property type="match status" value="1"/>
</dbReference>
<dbReference type="PROSITE" id="PS01136">
    <property type="entry name" value="UPF0034"/>
    <property type="match status" value="1"/>
</dbReference>
<gene>
    <name evidence="1" type="primary">dusC</name>
    <name type="ordered locus">HI_0270</name>
</gene>
<proteinExistence type="inferred from homology"/>
<protein>
    <recommendedName>
        <fullName evidence="1">tRNA-dihydrouridine(16) synthase</fullName>
        <ecNumber evidence="1">1.3.1.-</ecNumber>
    </recommendedName>
    <alternativeName>
        <fullName evidence="1">U16-specific dihydrouridine synthase</fullName>
        <shortName evidence="1">U16-specific Dus</shortName>
    </alternativeName>
    <alternativeName>
        <fullName evidence="1">tRNA-dihydrouridine synthase C</fullName>
    </alternativeName>
</protein>